<comment type="subcellular location">
    <subcellularLocation>
        <location evidence="1">Mitochondrion</location>
    </subcellularLocation>
</comment>
<comment type="similarity">
    <text evidence="6">Belongs to the TRAFAC class myosin-kinesin ATPase superfamily. Kinesin family. KIN-7 subfamily.</text>
</comment>
<comment type="sequence caution" evidence="7">
    <conflict type="erroneous gene model prediction">
        <sequence resource="EMBL-CDS" id="CAB38825"/>
    </conflict>
</comment>
<comment type="sequence caution" evidence="7">
    <conflict type="erroneous gene model prediction">
        <sequence resource="EMBL-CDS" id="CAB80568"/>
    </conflict>
</comment>
<gene>
    <name evidence="7" type="primary">KIN7D</name>
    <name evidence="9" type="synonym">MKRP2</name>
    <name evidence="8" type="ordered locus">At4g39050</name>
    <name evidence="10" type="ORF">F19H22.150</name>
</gene>
<protein>
    <recommendedName>
        <fullName evidence="7">Kinesin-like protein KIN-7D, mitochondrial</fullName>
    </recommendedName>
    <alternativeName>
        <fullName evidence="5">Mitochondria-targeted kinesin-related protein 2</fullName>
    </alternativeName>
</protein>
<organism>
    <name type="scientific">Arabidopsis thaliana</name>
    <name type="common">Mouse-ear cress</name>
    <dbReference type="NCBI Taxonomy" id="3702"/>
    <lineage>
        <taxon>Eukaryota</taxon>
        <taxon>Viridiplantae</taxon>
        <taxon>Streptophyta</taxon>
        <taxon>Embryophyta</taxon>
        <taxon>Tracheophyta</taxon>
        <taxon>Spermatophyta</taxon>
        <taxon>Magnoliopsida</taxon>
        <taxon>eudicotyledons</taxon>
        <taxon>Gunneridae</taxon>
        <taxon>Pentapetalae</taxon>
        <taxon>rosids</taxon>
        <taxon>malvids</taxon>
        <taxon>Brassicales</taxon>
        <taxon>Brassicaceae</taxon>
        <taxon>Camelineae</taxon>
        <taxon>Arabidopsis</taxon>
    </lineage>
</organism>
<keyword id="KW-0067">ATP-binding</keyword>
<keyword id="KW-0175">Coiled coil</keyword>
<keyword id="KW-0479">Metal-binding</keyword>
<keyword id="KW-0493">Microtubule</keyword>
<keyword id="KW-0496">Mitochondrion</keyword>
<keyword id="KW-0505">Motor protein</keyword>
<keyword id="KW-0547">Nucleotide-binding</keyword>
<keyword id="KW-1185">Reference proteome</keyword>
<keyword id="KW-0809">Transit peptide</keyword>
<keyword id="KW-0862">Zinc</keyword>
<keyword id="KW-0863">Zinc-finger</keyword>
<accession>Q8W5R5</accession>
<accession>Q8RWW4</accession>
<accession>Q9SVI8</accession>
<dbReference type="EMBL" id="AB062739">
    <property type="protein sequence ID" value="BAB71852.1"/>
    <property type="molecule type" value="mRNA"/>
</dbReference>
<dbReference type="EMBL" id="AL035679">
    <property type="protein sequence ID" value="CAB38825.1"/>
    <property type="status" value="ALT_SEQ"/>
    <property type="molecule type" value="Genomic_DNA"/>
</dbReference>
<dbReference type="EMBL" id="AL161594">
    <property type="protein sequence ID" value="CAB80568.1"/>
    <property type="status" value="ALT_SEQ"/>
    <property type="molecule type" value="Genomic_DNA"/>
</dbReference>
<dbReference type="EMBL" id="CP002687">
    <property type="protein sequence ID" value="AEE87012.1"/>
    <property type="molecule type" value="Genomic_DNA"/>
</dbReference>
<dbReference type="EMBL" id="AY091060">
    <property type="protein sequence ID" value="AAM13881.1"/>
    <property type="molecule type" value="mRNA"/>
</dbReference>
<dbReference type="EMBL" id="AY150516">
    <property type="protein sequence ID" value="AAN13032.1"/>
    <property type="molecule type" value="mRNA"/>
</dbReference>
<dbReference type="PIR" id="T06065">
    <property type="entry name" value="T06065"/>
</dbReference>
<dbReference type="RefSeq" id="NP_195616.2">
    <property type="nucleotide sequence ID" value="NM_120065.3"/>
</dbReference>
<dbReference type="SMR" id="Q8W5R5"/>
<dbReference type="FunCoup" id="Q8W5R5">
    <property type="interactions" value="1724"/>
</dbReference>
<dbReference type="IntAct" id="Q8W5R5">
    <property type="interactions" value="44"/>
</dbReference>
<dbReference type="STRING" id="3702.Q8W5R5"/>
<dbReference type="iPTMnet" id="Q8W5R5"/>
<dbReference type="PaxDb" id="3702-AT4G39050.1"/>
<dbReference type="ProteomicsDB" id="250699"/>
<dbReference type="EnsemblPlants" id="AT4G39050.1">
    <property type="protein sequence ID" value="AT4G39050.1"/>
    <property type="gene ID" value="AT4G39050"/>
</dbReference>
<dbReference type="GeneID" id="830060"/>
<dbReference type="Gramene" id="AT4G39050.1">
    <property type="protein sequence ID" value="AT4G39050.1"/>
    <property type="gene ID" value="AT4G39050"/>
</dbReference>
<dbReference type="KEGG" id="ath:AT4G39050"/>
<dbReference type="Araport" id="AT4G39050"/>
<dbReference type="TAIR" id="AT4G39050">
    <property type="gene designation" value="KIN7.4"/>
</dbReference>
<dbReference type="eggNOG" id="KOG0242">
    <property type="taxonomic scope" value="Eukaryota"/>
</dbReference>
<dbReference type="HOGENOM" id="CLU_004957_0_0_1"/>
<dbReference type="InParanoid" id="Q8W5R5"/>
<dbReference type="OMA" id="IGSRSMT"/>
<dbReference type="OrthoDB" id="3176171at2759"/>
<dbReference type="PhylomeDB" id="Q8W5R5"/>
<dbReference type="PRO" id="PR:Q8W5R5"/>
<dbReference type="Proteomes" id="UP000006548">
    <property type="component" value="Chromosome 4"/>
</dbReference>
<dbReference type="ExpressionAtlas" id="Q8W5R5">
    <property type="expression patterns" value="baseline and differential"/>
</dbReference>
<dbReference type="GO" id="GO:0005874">
    <property type="term" value="C:microtubule"/>
    <property type="evidence" value="ECO:0007669"/>
    <property type="project" value="UniProtKB-KW"/>
</dbReference>
<dbReference type="GO" id="GO:0005739">
    <property type="term" value="C:mitochondrion"/>
    <property type="evidence" value="ECO:0007669"/>
    <property type="project" value="UniProtKB-SubCell"/>
</dbReference>
<dbReference type="GO" id="GO:0005524">
    <property type="term" value="F:ATP binding"/>
    <property type="evidence" value="ECO:0007669"/>
    <property type="project" value="UniProtKB-KW"/>
</dbReference>
<dbReference type="GO" id="GO:0008017">
    <property type="term" value="F:microtubule binding"/>
    <property type="evidence" value="ECO:0007669"/>
    <property type="project" value="InterPro"/>
</dbReference>
<dbReference type="GO" id="GO:0003777">
    <property type="term" value="F:microtubule motor activity"/>
    <property type="evidence" value="ECO:0007669"/>
    <property type="project" value="InterPro"/>
</dbReference>
<dbReference type="GO" id="GO:0008270">
    <property type="term" value="F:zinc ion binding"/>
    <property type="evidence" value="ECO:0007669"/>
    <property type="project" value="UniProtKB-KW"/>
</dbReference>
<dbReference type="GO" id="GO:0007018">
    <property type="term" value="P:microtubule-based movement"/>
    <property type="evidence" value="ECO:0007669"/>
    <property type="project" value="InterPro"/>
</dbReference>
<dbReference type="GO" id="GO:0031347">
    <property type="term" value="P:regulation of defense response"/>
    <property type="evidence" value="ECO:0000315"/>
    <property type="project" value="TAIR"/>
</dbReference>
<dbReference type="CDD" id="cd01374">
    <property type="entry name" value="KISc_CENP_E"/>
    <property type="match status" value="1"/>
</dbReference>
<dbReference type="CDD" id="cd16649">
    <property type="entry name" value="mRING-HC-C3HC5_CGRF1-like"/>
    <property type="match status" value="1"/>
</dbReference>
<dbReference type="FunFam" id="3.30.40.10:FF:000148">
    <property type="entry name" value="Kinesin-like protein KIN-7D, mitochondrial"/>
    <property type="match status" value="1"/>
</dbReference>
<dbReference type="FunFam" id="3.40.850.10:FF:000014">
    <property type="entry name" value="Kinesin-like protein KIN-7G"/>
    <property type="match status" value="1"/>
</dbReference>
<dbReference type="Gene3D" id="3.40.850.10">
    <property type="entry name" value="Kinesin motor domain"/>
    <property type="match status" value="1"/>
</dbReference>
<dbReference type="Gene3D" id="3.30.40.10">
    <property type="entry name" value="Zinc/RING finger domain, C3HC4 (zinc finger)"/>
    <property type="match status" value="1"/>
</dbReference>
<dbReference type="InterPro" id="IPR027640">
    <property type="entry name" value="Kinesin-like_fam"/>
</dbReference>
<dbReference type="InterPro" id="IPR019821">
    <property type="entry name" value="Kinesin_motor_CS"/>
</dbReference>
<dbReference type="InterPro" id="IPR001752">
    <property type="entry name" value="Kinesin_motor_dom"/>
</dbReference>
<dbReference type="InterPro" id="IPR036961">
    <property type="entry name" value="Kinesin_motor_dom_sf"/>
</dbReference>
<dbReference type="InterPro" id="IPR027417">
    <property type="entry name" value="P-loop_NTPase"/>
</dbReference>
<dbReference type="InterPro" id="IPR001841">
    <property type="entry name" value="Znf_RING"/>
</dbReference>
<dbReference type="InterPro" id="IPR013083">
    <property type="entry name" value="Znf_RING/FYVE/PHD"/>
</dbReference>
<dbReference type="PANTHER" id="PTHR47968">
    <property type="entry name" value="CENTROMERE PROTEIN E"/>
    <property type="match status" value="1"/>
</dbReference>
<dbReference type="PANTHER" id="PTHR47968:SF35">
    <property type="entry name" value="KINESIN-LIKE PROTEIN KIN-7D, MITOCHONDRIAL ISOFORM X1"/>
    <property type="match status" value="1"/>
</dbReference>
<dbReference type="Pfam" id="PF00225">
    <property type="entry name" value="Kinesin"/>
    <property type="match status" value="1"/>
</dbReference>
<dbReference type="Pfam" id="PF13920">
    <property type="entry name" value="zf-C3HC4_3"/>
    <property type="match status" value="1"/>
</dbReference>
<dbReference type="PRINTS" id="PR00380">
    <property type="entry name" value="KINESINHEAVY"/>
</dbReference>
<dbReference type="SMART" id="SM00129">
    <property type="entry name" value="KISc"/>
    <property type="match status" value="1"/>
</dbReference>
<dbReference type="SUPFAM" id="SSF52540">
    <property type="entry name" value="P-loop containing nucleoside triphosphate hydrolases"/>
    <property type="match status" value="1"/>
</dbReference>
<dbReference type="SUPFAM" id="SSF57850">
    <property type="entry name" value="RING/U-box"/>
    <property type="match status" value="1"/>
</dbReference>
<dbReference type="PROSITE" id="PS00411">
    <property type="entry name" value="KINESIN_MOTOR_1"/>
    <property type="match status" value="1"/>
</dbReference>
<dbReference type="PROSITE" id="PS50067">
    <property type="entry name" value="KINESIN_MOTOR_2"/>
    <property type="match status" value="1"/>
</dbReference>
<dbReference type="PROSITE" id="PS50089">
    <property type="entry name" value="ZF_RING_2"/>
    <property type="match status" value="1"/>
</dbReference>
<sequence>MASSSSRTRSSRPPSPASSTSSSHLSNRLIPRSNSTSASSLITSAAGIASRSMTPSRTFSDSGLIGSGSFGIGSPVPYPSEELLGDPMDDTISSERDSISVTVRFRPLSDREYQRGDEVAWYPDGDTLVRHEYNPLTAYAFDKVFGPQATTIDVYDVAARPVVKAAMEGVNGTVFAYGVTSSGKTHTMHGDQESPGIIPLAIKDVFSIIQDTPGREFLLRVSYLEIYNEVINDLLDPTGQNLRVREDSQGTYVEGIKEEVVLSPGHALSFIAAGEEHRHVGSNNFNLLSSRSHTIFTLMVESSATGDEYDGVIFSQLNLIDLAGSESSKTETTGLRRKEGSYINKSLLTLGTVIGKLSEGKATHIPYRDSKLTRLLQSSLSGHGHVSLICTITPASSSSEETHNTLKFASRAKSIEIYASRNQIIDEKSLIKKYQREISTLKLELDQLRRGMLVGVSHEELMSLKQQLEEGQVKMQSRLEEEEEAKAALMSRIQKLTKLILVSTKNSIPGYSGDIPTHQRSLSAGKDDKFDSLLLESDNLGSPSSTLALLSEGSLGFNHRRSSSKLNDENSPGAEFTQGVMTPDEIDLLVEQVKMLAGEIAFSTSTLKRLVDQSVNDPENSQTQIQNLEREIHEKQRQMRGLEQLIIESGEASIANASLVEMQQKVMSLMTQCNEKSFELEIKSADNCILQEQLQEKCTENKELHEKVNLLEQRLNAVSSEKSSPSCSNKAVSGEYADELKKKIQSQEIENEELKLEHVQIVEENSGLRVQNQKLAEEASYAKELASAAAVELKNLASEVTKLSLQNTKLEKELAAARDLAQTRNPMNGVNRKYNDGARSGRKGRISSSRSSGDEFDAWNLDPEDLKMELQVRKQREVALESALAEKEFIEDEYRKKAEEAKRREEALENDLANMWVLVAKLKKDNGALPEPNGTDPGRELEKSQSHAVLKERQVSSAPRQPEVVVVAKTEETPKEEPLVARLKARMQEMKEKEMKSQANGDANSHICKVCFESPTAAILLPCRHFCLCKSCSLACSECPICRTKISDRLFAFPS</sequence>
<evidence type="ECO:0000255" key="1"/>
<evidence type="ECO:0000255" key="2">
    <source>
        <dbReference type="PROSITE-ProRule" id="PRU00175"/>
    </source>
</evidence>
<evidence type="ECO:0000255" key="3">
    <source>
        <dbReference type="PROSITE-ProRule" id="PRU00283"/>
    </source>
</evidence>
<evidence type="ECO:0000256" key="4">
    <source>
        <dbReference type="SAM" id="MobiDB-lite"/>
    </source>
</evidence>
<evidence type="ECO:0000303" key="5">
    <source>
    </source>
</evidence>
<evidence type="ECO:0000303" key="6">
    <source>
    </source>
</evidence>
<evidence type="ECO:0000305" key="7"/>
<evidence type="ECO:0000312" key="8">
    <source>
        <dbReference type="Araport" id="AT4G39050"/>
    </source>
</evidence>
<evidence type="ECO:0000312" key="9">
    <source>
        <dbReference type="EMBL" id="BAB71852.1"/>
    </source>
</evidence>
<evidence type="ECO:0000312" key="10">
    <source>
        <dbReference type="EMBL" id="CAB38825.1"/>
    </source>
</evidence>
<feature type="transit peptide" description="Mitochondrion" evidence="5">
    <location>
        <begin position="1"/>
        <end position="96"/>
    </location>
</feature>
<feature type="chain" id="PRO_0000436462" description="Kinesin-like protein KIN-7D, mitochondrial" evidence="1">
    <location>
        <begin position="97"/>
        <end position="1055"/>
    </location>
</feature>
<feature type="domain" description="Kinesin motor" evidence="3">
    <location>
        <begin position="98"/>
        <end position="415"/>
    </location>
</feature>
<feature type="zinc finger region" description="RING-type" evidence="2">
    <location>
        <begin position="1008"/>
        <end position="1043"/>
    </location>
</feature>
<feature type="region of interest" description="Disordered" evidence="4">
    <location>
        <begin position="1"/>
        <end position="36"/>
    </location>
</feature>
<feature type="region of interest" description="Disordered" evidence="4">
    <location>
        <begin position="826"/>
        <end position="856"/>
    </location>
</feature>
<feature type="region of interest" description="Disordered" evidence="4">
    <location>
        <begin position="926"/>
        <end position="963"/>
    </location>
</feature>
<feature type="coiled-coil region" evidence="1">
    <location>
        <begin position="419"/>
        <end position="503"/>
    </location>
</feature>
<feature type="coiled-coil region" evidence="1">
    <location>
        <begin position="618"/>
        <end position="653"/>
    </location>
</feature>
<feature type="coiled-coil region" evidence="1">
    <location>
        <begin position="694"/>
        <end position="823"/>
    </location>
</feature>
<feature type="coiled-coil region" evidence="1">
    <location>
        <begin position="880"/>
        <end position="911"/>
    </location>
</feature>
<feature type="compositionally biased region" description="Low complexity" evidence="4">
    <location>
        <begin position="1"/>
        <end position="23"/>
    </location>
</feature>
<feature type="compositionally biased region" description="Basic and acidic residues" evidence="4">
    <location>
        <begin position="937"/>
        <end position="954"/>
    </location>
</feature>
<feature type="binding site" evidence="3">
    <location>
        <begin position="178"/>
        <end position="185"/>
    </location>
    <ligand>
        <name>ATP</name>
        <dbReference type="ChEBI" id="CHEBI:30616"/>
    </ligand>
</feature>
<feature type="sequence conflict" description="In Ref. 4; AAM13881." evidence="7" ref="4">
    <original>E</original>
    <variation>K</variation>
    <location>
        <position position="893"/>
    </location>
</feature>
<name>KN7D_ARATH</name>
<proteinExistence type="evidence at transcript level"/>
<reference key="1">
    <citation type="journal article" date="2001" name="Plant Physiol.">
        <title>Kinesin-related proteins with a mitochondrial targeting signal.</title>
        <authorList>
            <person name="Itoh R."/>
            <person name="Fujiwara M."/>
            <person name="Yoshida S."/>
        </authorList>
    </citation>
    <scope>NUCLEOTIDE SEQUENCE [MRNA]</scope>
</reference>
<reference key="2">
    <citation type="journal article" date="1999" name="Nature">
        <title>Sequence and analysis of chromosome 4 of the plant Arabidopsis thaliana.</title>
        <authorList>
            <person name="Mayer K.F.X."/>
            <person name="Schueller C."/>
            <person name="Wambutt R."/>
            <person name="Murphy G."/>
            <person name="Volckaert G."/>
            <person name="Pohl T."/>
            <person name="Duesterhoeft A."/>
            <person name="Stiekema W."/>
            <person name="Entian K.-D."/>
            <person name="Terryn N."/>
            <person name="Harris B."/>
            <person name="Ansorge W."/>
            <person name="Brandt P."/>
            <person name="Grivell L.A."/>
            <person name="Rieger M."/>
            <person name="Weichselgartner M."/>
            <person name="de Simone V."/>
            <person name="Obermaier B."/>
            <person name="Mache R."/>
            <person name="Mueller M."/>
            <person name="Kreis M."/>
            <person name="Delseny M."/>
            <person name="Puigdomenech P."/>
            <person name="Watson M."/>
            <person name="Schmidtheini T."/>
            <person name="Reichert B."/>
            <person name="Portetelle D."/>
            <person name="Perez-Alonso M."/>
            <person name="Boutry M."/>
            <person name="Bancroft I."/>
            <person name="Vos P."/>
            <person name="Hoheisel J."/>
            <person name="Zimmermann W."/>
            <person name="Wedler H."/>
            <person name="Ridley P."/>
            <person name="Langham S.-A."/>
            <person name="McCullagh B."/>
            <person name="Bilham L."/>
            <person name="Robben J."/>
            <person name="van der Schueren J."/>
            <person name="Grymonprez B."/>
            <person name="Chuang Y.-J."/>
            <person name="Vandenbussche F."/>
            <person name="Braeken M."/>
            <person name="Weltjens I."/>
            <person name="Voet M."/>
            <person name="Bastiaens I."/>
            <person name="Aert R."/>
            <person name="Defoor E."/>
            <person name="Weitzenegger T."/>
            <person name="Bothe G."/>
            <person name="Ramsperger U."/>
            <person name="Hilbert H."/>
            <person name="Braun M."/>
            <person name="Holzer E."/>
            <person name="Brandt A."/>
            <person name="Peters S."/>
            <person name="van Staveren M."/>
            <person name="Dirkse W."/>
            <person name="Mooijman P."/>
            <person name="Klein Lankhorst R."/>
            <person name="Rose M."/>
            <person name="Hauf J."/>
            <person name="Koetter P."/>
            <person name="Berneiser S."/>
            <person name="Hempel S."/>
            <person name="Feldpausch M."/>
            <person name="Lamberth S."/>
            <person name="Van den Daele H."/>
            <person name="De Keyser A."/>
            <person name="Buysshaert C."/>
            <person name="Gielen J."/>
            <person name="Villarroel R."/>
            <person name="De Clercq R."/>
            <person name="van Montagu M."/>
            <person name="Rogers J."/>
            <person name="Cronin A."/>
            <person name="Quail M.A."/>
            <person name="Bray-Allen S."/>
            <person name="Clark L."/>
            <person name="Doggett J."/>
            <person name="Hall S."/>
            <person name="Kay M."/>
            <person name="Lennard N."/>
            <person name="McLay K."/>
            <person name="Mayes R."/>
            <person name="Pettett A."/>
            <person name="Rajandream M.A."/>
            <person name="Lyne M."/>
            <person name="Benes V."/>
            <person name="Rechmann S."/>
            <person name="Borkova D."/>
            <person name="Bloecker H."/>
            <person name="Scharfe M."/>
            <person name="Grimm M."/>
            <person name="Loehnert T.-H."/>
            <person name="Dose S."/>
            <person name="de Haan M."/>
            <person name="Maarse A.C."/>
            <person name="Schaefer M."/>
            <person name="Mueller-Auer S."/>
            <person name="Gabel C."/>
            <person name="Fuchs M."/>
            <person name="Fartmann B."/>
            <person name="Granderath K."/>
            <person name="Dauner D."/>
            <person name="Herzl A."/>
            <person name="Neumann S."/>
            <person name="Argiriou A."/>
            <person name="Vitale D."/>
            <person name="Liguori R."/>
            <person name="Piravandi E."/>
            <person name="Massenet O."/>
            <person name="Quigley F."/>
            <person name="Clabauld G."/>
            <person name="Muendlein A."/>
            <person name="Felber R."/>
            <person name="Schnabl S."/>
            <person name="Hiller R."/>
            <person name="Schmidt W."/>
            <person name="Lecharny A."/>
            <person name="Aubourg S."/>
            <person name="Chefdor F."/>
            <person name="Cooke R."/>
            <person name="Berger C."/>
            <person name="Monfort A."/>
            <person name="Casacuberta E."/>
            <person name="Gibbons T."/>
            <person name="Weber N."/>
            <person name="Vandenbol M."/>
            <person name="Bargues M."/>
            <person name="Terol J."/>
            <person name="Torres A."/>
            <person name="Perez-Perez A."/>
            <person name="Purnelle B."/>
            <person name="Bent E."/>
            <person name="Johnson S."/>
            <person name="Tacon D."/>
            <person name="Jesse T."/>
            <person name="Heijnen L."/>
            <person name="Schwarz S."/>
            <person name="Scholler P."/>
            <person name="Heber S."/>
            <person name="Francs P."/>
            <person name="Bielke C."/>
            <person name="Frishman D."/>
            <person name="Haase D."/>
            <person name="Lemcke K."/>
            <person name="Mewes H.-W."/>
            <person name="Stocker S."/>
            <person name="Zaccaria P."/>
            <person name="Bevan M."/>
            <person name="Wilson R.K."/>
            <person name="de la Bastide M."/>
            <person name="Habermann K."/>
            <person name="Parnell L."/>
            <person name="Dedhia N."/>
            <person name="Gnoj L."/>
            <person name="Schutz K."/>
            <person name="Huang E."/>
            <person name="Spiegel L."/>
            <person name="Sekhon M."/>
            <person name="Murray J."/>
            <person name="Sheet P."/>
            <person name="Cordes M."/>
            <person name="Abu-Threideh J."/>
            <person name="Stoneking T."/>
            <person name="Kalicki J."/>
            <person name="Graves T."/>
            <person name="Harmon G."/>
            <person name="Edwards J."/>
            <person name="Latreille P."/>
            <person name="Courtney L."/>
            <person name="Cloud J."/>
            <person name="Abbott A."/>
            <person name="Scott K."/>
            <person name="Johnson D."/>
            <person name="Minx P."/>
            <person name="Bentley D."/>
            <person name="Fulton B."/>
            <person name="Miller N."/>
            <person name="Greco T."/>
            <person name="Kemp K."/>
            <person name="Kramer J."/>
            <person name="Fulton L."/>
            <person name="Mardis E."/>
            <person name="Dante M."/>
            <person name="Pepin K."/>
            <person name="Hillier L.W."/>
            <person name="Nelson J."/>
            <person name="Spieth J."/>
            <person name="Ryan E."/>
            <person name="Andrews S."/>
            <person name="Geisel C."/>
            <person name="Layman D."/>
            <person name="Du H."/>
            <person name="Ali J."/>
            <person name="Berghoff A."/>
            <person name="Jones K."/>
            <person name="Drone K."/>
            <person name="Cotton M."/>
            <person name="Joshu C."/>
            <person name="Antonoiu B."/>
            <person name="Zidanic M."/>
            <person name="Strong C."/>
            <person name="Sun H."/>
            <person name="Lamar B."/>
            <person name="Yordan C."/>
            <person name="Ma P."/>
            <person name="Zhong J."/>
            <person name="Preston R."/>
            <person name="Vil D."/>
            <person name="Shekher M."/>
            <person name="Matero A."/>
            <person name="Shah R."/>
            <person name="Swaby I.K."/>
            <person name="O'Shaughnessy A."/>
            <person name="Rodriguez M."/>
            <person name="Hoffman J."/>
            <person name="Till S."/>
            <person name="Granat S."/>
            <person name="Shohdy N."/>
            <person name="Hasegawa A."/>
            <person name="Hameed A."/>
            <person name="Lodhi M."/>
            <person name="Johnson A."/>
            <person name="Chen E."/>
            <person name="Marra M.A."/>
            <person name="Martienssen R."/>
            <person name="McCombie W.R."/>
        </authorList>
    </citation>
    <scope>NUCLEOTIDE SEQUENCE [LARGE SCALE GENOMIC DNA]</scope>
    <source>
        <strain>cv. Columbia</strain>
    </source>
</reference>
<reference key="3">
    <citation type="journal article" date="2017" name="Plant J.">
        <title>Araport11: a complete reannotation of the Arabidopsis thaliana reference genome.</title>
        <authorList>
            <person name="Cheng C.Y."/>
            <person name="Krishnakumar V."/>
            <person name="Chan A.P."/>
            <person name="Thibaud-Nissen F."/>
            <person name="Schobel S."/>
            <person name="Town C.D."/>
        </authorList>
    </citation>
    <scope>GENOME REANNOTATION</scope>
    <source>
        <strain>cv. Columbia</strain>
    </source>
</reference>
<reference key="4">
    <citation type="journal article" date="2003" name="Science">
        <title>Empirical analysis of transcriptional activity in the Arabidopsis genome.</title>
        <authorList>
            <person name="Yamada K."/>
            <person name="Lim J."/>
            <person name="Dale J.M."/>
            <person name="Chen H."/>
            <person name="Shinn P."/>
            <person name="Palm C.J."/>
            <person name="Southwick A.M."/>
            <person name="Wu H.C."/>
            <person name="Kim C.J."/>
            <person name="Nguyen M."/>
            <person name="Pham P.K."/>
            <person name="Cheuk R.F."/>
            <person name="Karlin-Newmann G."/>
            <person name="Liu S.X."/>
            <person name="Lam B."/>
            <person name="Sakano H."/>
            <person name="Wu T."/>
            <person name="Yu G."/>
            <person name="Miranda M."/>
            <person name="Quach H.L."/>
            <person name="Tripp M."/>
            <person name="Chang C.H."/>
            <person name="Lee J.M."/>
            <person name="Toriumi M.J."/>
            <person name="Chan M.M."/>
            <person name="Tang C.C."/>
            <person name="Onodera C.S."/>
            <person name="Deng J.M."/>
            <person name="Akiyama K."/>
            <person name="Ansari Y."/>
            <person name="Arakawa T."/>
            <person name="Banh J."/>
            <person name="Banno F."/>
            <person name="Bowser L."/>
            <person name="Brooks S.Y."/>
            <person name="Carninci P."/>
            <person name="Chao Q."/>
            <person name="Choy N."/>
            <person name="Enju A."/>
            <person name="Goldsmith A.D."/>
            <person name="Gurjal M."/>
            <person name="Hansen N.F."/>
            <person name="Hayashizaki Y."/>
            <person name="Johnson-Hopson C."/>
            <person name="Hsuan V.W."/>
            <person name="Iida K."/>
            <person name="Karnes M."/>
            <person name="Khan S."/>
            <person name="Koesema E."/>
            <person name="Ishida J."/>
            <person name="Jiang P.X."/>
            <person name="Jones T."/>
            <person name="Kawai J."/>
            <person name="Kamiya A."/>
            <person name="Meyers C."/>
            <person name="Nakajima M."/>
            <person name="Narusaka M."/>
            <person name="Seki M."/>
            <person name="Sakurai T."/>
            <person name="Satou M."/>
            <person name="Tamse R."/>
            <person name="Vaysberg M."/>
            <person name="Wallender E.K."/>
            <person name="Wong C."/>
            <person name="Yamamura Y."/>
            <person name="Yuan S."/>
            <person name="Shinozaki K."/>
            <person name="Davis R.W."/>
            <person name="Theologis A."/>
            <person name="Ecker J.R."/>
        </authorList>
    </citation>
    <scope>NUCLEOTIDE SEQUENCE [LARGE SCALE MRNA]</scope>
    <source>
        <strain>cv. Columbia</strain>
    </source>
</reference>
<reference key="5">
    <citation type="journal article" date="2001" name="BMC Genomics">
        <title>Kinesins in the Arabidopsis genome: a comparative analysis among eukaryotes.</title>
        <authorList>
            <person name="Reddy A.S."/>
            <person name="Day I.S."/>
        </authorList>
    </citation>
    <scope>GENE FAMILY</scope>
</reference>
<reference key="6">
    <citation type="journal article" date="2006" name="BMC Genomics">
        <title>Comprehensive comparative analysis of kinesins in photosynthetic eukaryotes.</title>
        <authorList>
            <person name="Richardson D.N."/>
            <person name="Simmons M.P."/>
            <person name="Reddy A.S."/>
        </authorList>
    </citation>
    <scope>GENE FAMILY</scope>
    <scope>NOMENCLATURE</scope>
</reference>
<reference key="7">
    <citation type="journal article" date="2012" name="Protoplasma">
        <title>Functions of the Arabidopsis kinesin superfamily of microtubule-based motor proteins.</title>
        <authorList>
            <person name="Zhu C."/>
            <person name="Dixit R."/>
        </authorList>
    </citation>
    <scope>REVIEW</scope>
</reference>